<feature type="chain" id="PRO_0000181798" description="tRNA(Ile)-lysidine synthase">
    <location>
        <begin position="1"/>
        <end position="415"/>
    </location>
</feature>
<feature type="binding site" evidence="1">
    <location>
        <begin position="36"/>
        <end position="41"/>
    </location>
    <ligand>
        <name>ATP</name>
        <dbReference type="ChEBI" id="CHEBI:30616"/>
    </ligand>
</feature>
<reference key="1">
    <citation type="journal article" date="2003" name="Genome Res.">
        <title>Tropheryma whipplei twist: a human pathogenic Actinobacteria with a reduced genome.</title>
        <authorList>
            <person name="Raoult D."/>
            <person name="Ogata H."/>
            <person name="Audic S."/>
            <person name="Robert C."/>
            <person name="Suhre K."/>
            <person name="Drancourt M."/>
            <person name="Claverie J.-M."/>
        </authorList>
    </citation>
    <scope>NUCLEOTIDE SEQUENCE [LARGE SCALE GENOMIC DNA]</scope>
    <source>
        <strain>Twist</strain>
    </source>
</reference>
<evidence type="ECO:0000255" key="1">
    <source>
        <dbReference type="HAMAP-Rule" id="MF_01161"/>
    </source>
</evidence>
<name>TILS_TROWT</name>
<gene>
    <name evidence="1" type="primary">tilS</name>
    <name type="ordered locus">TWT_590</name>
</gene>
<sequence>MLHRPRITPAVANARRAMLNTLPADLHNQLVLIALSGGRDSLAAMVIASWVIPRLNGRVGAVVVDHGLQENSARIADEVRIRAEQFALNPILIKRVSPSRVSAGPEASARIARYAAFYDALEETKAYAIILAHTLDDQAETVLLGLMRGSGPSSLRGMKAVSYTPEDCRYMNNKACNSVTAVYAHNTQRCSCDSTQRCSCDSRPYPPPPEPRNENRSYFPHPSCKCVEGSATRFTNADIDSRFGVFIRPFLDITRHETGKICEFYGLDYWNDPHNEDVRFSRVRIRHNVMPVLENEIGPGVKYALSRTAKLAQLDTEYLDHLSNELLDEIASKESDWSIRLPINTLQKTPVPIRLRVIRLAALQYFTVSLSFKHTRQIERLLCSSCDIKHVNLPRLITAQRVGNYIYMHTLRGKL</sequence>
<keyword id="KW-0067">ATP-binding</keyword>
<keyword id="KW-0963">Cytoplasm</keyword>
<keyword id="KW-0436">Ligase</keyword>
<keyword id="KW-0547">Nucleotide-binding</keyword>
<keyword id="KW-1185">Reference proteome</keyword>
<keyword id="KW-0819">tRNA processing</keyword>
<accession>Q83MT2</accession>
<proteinExistence type="inferred from homology"/>
<organism>
    <name type="scientific">Tropheryma whipplei (strain Twist)</name>
    <name type="common">Whipple's bacillus</name>
    <dbReference type="NCBI Taxonomy" id="203267"/>
    <lineage>
        <taxon>Bacteria</taxon>
        <taxon>Bacillati</taxon>
        <taxon>Actinomycetota</taxon>
        <taxon>Actinomycetes</taxon>
        <taxon>Micrococcales</taxon>
        <taxon>Tropherymataceae</taxon>
        <taxon>Tropheryma</taxon>
    </lineage>
</organism>
<comment type="function">
    <text evidence="1">Ligates lysine onto the cytidine present at position 34 of the AUA codon-specific tRNA(Ile) that contains the anticodon CAU, in an ATP-dependent manner. Cytidine is converted to lysidine, thus changing the amino acid specificity of the tRNA from methionine to isoleucine.</text>
</comment>
<comment type="catalytic activity">
    <reaction evidence="1">
        <text>cytidine(34) in tRNA(Ile2) + L-lysine + ATP = lysidine(34) in tRNA(Ile2) + AMP + diphosphate + H(+)</text>
        <dbReference type="Rhea" id="RHEA:43744"/>
        <dbReference type="Rhea" id="RHEA-COMP:10625"/>
        <dbReference type="Rhea" id="RHEA-COMP:10670"/>
        <dbReference type="ChEBI" id="CHEBI:15378"/>
        <dbReference type="ChEBI" id="CHEBI:30616"/>
        <dbReference type="ChEBI" id="CHEBI:32551"/>
        <dbReference type="ChEBI" id="CHEBI:33019"/>
        <dbReference type="ChEBI" id="CHEBI:82748"/>
        <dbReference type="ChEBI" id="CHEBI:83665"/>
        <dbReference type="ChEBI" id="CHEBI:456215"/>
        <dbReference type="EC" id="6.3.4.19"/>
    </reaction>
</comment>
<comment type="subcellular location">
    <subcellularLocation>
        <location evidence="1">Cytoplasm</location>
    </subcellularLocation>
</comment>
<comment type="domain">
    <text>The N-terminal region contains the highly conserved SGGXDS motif, predicted to be a P-loop motif involved in ATP binding.</text>
</comment>
<comment type="similarity">
    <text evidence="1">Belongs to the tRNA(Ile)-lysidine synthase family.</text>
</comment>
<dbReference type="EC" id="6.3.4.19" evidence="1"/>
<dbReference type="EMBL" id="AE014184">
    <property type="protein sequence ID" value="AAO44687.1"/>
    <property type="molecule type" value="Genomic_DNA"/>
</dbReference>
<dbReference type="RefSeq" id="WP_011102666.1">
    <property type="nucleotide sequence ID" value="NC_004572.3"/>
</dbReference>
<dbReference type="SMR" id="Q83MT2"/>
<dbReference type="STRING" id="203267.TWT_590"/>
<dbReference type="KEGG" id="twh:TWT_590"/>
<dbReference type="eggNOG" id="COG0037">
    <property type="taxonomic scope" value="Bacteria"/>
</dbReference>
<dbReference type="HOGENOM" id="CLU_018869_1_0_11"/>
<dbReference type="OrthoDB" id="5244702at2"/>
<dbReference type="Proteomes" id="UP000002200">
    <property type="component" value="Chromosome"/>
</dbReference>
<dbReference type="GO" id="GO:0005737">
    <property type="term" value="C:cytoplasm"/>
    <property type="evidence" value="ECO:0007669"/>
    <property type="project" value="UniProtKB-SubCell"/>
</dbReference>
<dbReference type="GO" id="GO:0005524">
    <property type="term" value="F:ATP binding"/>
    <property type="evidence" value="ECO:0007669"/>
    <property type="project" value="UniProtKB-UniRule"/>
</dbReference>
<dbReference type="GO" id="GO:0032267">
    <property type="term" value="F:tRNA(Ile)-lysidine synthase activity"/>
    <property type="evidence" value="ECO:0007669"/>
    <property type="project" value="UniProtKB-EC"/>
</dbReference>
<dbReference type="GO" id="GO:0006400">
    <property type="term" value="P:tRNA modification"/>
    <property type="evidence" value="ECO:0007669"/>
    <property type="project" value="UniProtKB-UniRule"/>
</dbReference>
<dbReference type="CDD" id="cd01992">
    <property type="entry name" value="TilS_N"/>
    <property type="match status" value="1"/>
</dbReference>
<dbReference type="Gene3D" id="1.20.59.20">
    <property type="match status" value="1"/>
</dbReference>
<dbReference type="Gene3D" id="3.40.50.620">
    <property type="entry name" value="HUPs"/>
    <property type="match status" value="1"/>
</dbReference>
<dbReference type="HAMAP" id="MF_01161">
    <property type="entry name" value="tRNA_Ile_lys_synt"/>
    <property type="match status" value="1"/>
</dbReference>
<dbReference type="InterPro" id="IPR014729">
    <property type="entry name" value="Rossmann-like_a/b/a_fold"/>
</dbReference>
<dbReference type="InterPro" id="IPR011063">
    <property type="entry name" value="TilS/TtcA_N"/>
</dbReference>
<dbReference type="InterPro" id="IPR012094">
    <property type="entry name" value="tRNA_Ile_lys_synt"/>
</dbReference>
<dbReference type="InterPro" id="IPR012795">
    <property type="entry name" value="tRNA_Ile_lys_synt_N"/>
</dbReference>
<dbReference type="NCBIfam" id="TIGR02432">
    <property type="entry name" value="lysidine_TilS_N"/>
    <property type="match status" value="1"/>
</dbReference>
<dbReference type="PANTHER" id="PTHR43033">
    <property type="entry name" value="TRNA(ILE)-LYSIDINE SYNTHASE-RELATED"/>
    <property type="match status" value="1"/>
</dbReference>
<dbReference type="PANTHER" id="PTHR43033:SF1">
    <property type="entry name" value="TRNA(ILE)-LYSIDINE SYNTHASE-RELATED"/>
    <property type="match status" value="1"/>
</dbReference>
<dbReference type="Pfam" id="PF01171">
    <property type="entry name" value="ATP_bind_3"/>
    <property type="match status" value="2"/>
</dbReference>
<dbReference type="SUPFAM" id="SSF52402">
    <property type="entry name" value="Adenine nucleotide alpha hydrolases-like"/>
    <property type="match status" value="1"/>
</dbReference>
<dbReference type="SUPFAM" id="SSF82829">
    <property type="entry name" value="MesJ substrate recognition domain-like"/>
    <property type="match status" value="1"/>
</dbReference>
<protein>
    <recommendedName>
        <fullName evidence="1">tRNA(Ile)-lysidine synthase</fullName>
        <ecNumber evidence="1">6.3.4.19</ecNumber>
    </recommendedName>
    <alternativeName>
        <fullName evidence="1">tRNA(Ile)-2-lysyl-cytidine synthase</fullName>
    </alternativeName>
    <alternativeName>
        <fullName evidence="1">tRNA(Ile)-lysidine synthetase</fullName>
    </alternativeName>
</protein>